<name>NIKB_STAAW</name>
<feature type="chain" id="PRO_0000276779" description="Nickel import system permease protein NikB">
    <location>
        <begin position="1"/>
        <end position="328"/>
    </location>
</feature>
<feature type="transmembrane region" description="Helical" evidence="2">
    <location>
        <begin position="11"/>
        <end position="31"/>
    </location>
</feature>
<feature type="transmembrane region" description="Helical" evidence="2">
    <location>
        <begin position="104"/>
        <end position="124"/>
    </location>
</feature>
<feature type="transmembrane region" description="Helical" evidence="2">
    <location>
        <begin position="139"/>
        <end position="159"/>
    </location>
</feature>
<feature type="transmembrane region" description="Helical" evidence="2">
    <location>
        <begin position="170"/>
        <end position="190"/>
    </location>
</feature>
<feature type="transmembrane region" description="Helical" evidence="2">
    <location>
        <begin position="229"/>
        <end position="249"/>
    </location>
</feature>
<feature type="transmembrane region" description="Helical" evidence="2">
    <location>
        <begin position="279"/>
        <end position="299"/>
    </location>
</feature>
<feature type="domain" description="ABC transmembrane type-1" evidence="2">
    <location>
        <begin position="100"/>
        <end position="297"/>
    </location>
</feature>
<organism>
    <name type="scientific">Staphylococcus aureus (strain MW2)</name>
    <dbReference type="NCBI Taxonomy" id="196620"/>
    <lineage>
        <taxon>Bacteria</taxon>
        <taxon>Bacillati</taxon>
        <taxon>Bacillota</taxon>
        <taxon>Bacilli</taxon>
        <taxon>Bacillales</taxon>
        <taxon>Staphylococcaceae</taxon>
        <taxon>Staphylococcus</taxon>
    </lineage>
</organism>
<dbReference type="EMBL" id="BA000033">
    <property type="protein sequence ID" value="BAB95135.1"/>
    <property type="molecule type" value="Genomic_DNA"/>
</dbReference>
<dbReference type="RefSeq" id="WP_000469950.1">
    <property type="nucleotide sequence ID" value="NC_003923.1"/>
</dbReference>
<dbReference type="SMR" id="Q8NWT4"/>
<dbReference type="KEGG" id="sam:MW1270"/>
<dbReference type="HOGENOM" id="CLU_036879_0_2_9"/>
<dbReference type="GO" id="GO:0005886">
    <property type="term" value="C:plasma membrane"/>
    <property type="evidence" value="ECO:0007669"/>
    <property type="project" value="UniProtKB-SubCell"/>
</dbReference>
<dbReference type="GO" id="GO:0015099">
    <property type="term" value="F:nickel cation transmembrane transporter activity"/>
    <property type="evidence" value="ECO:0007669"/>
    <property type="project" value="InterPro"/>
</dbReference>
<dbReference type="CDD" id="cd06261">
    <property type="entry name" value="TM_PBP2"/>
    <property type="match status" value="1"/>
</dbReference>
<dbReference type="Gene3D" id="1.10.3720.10">
    <property type="entry name" value="MetI-like"/>
    <property type="match status" value="1"/>
</dbReference>
<dbReference type="InterPro" id="IPR045621">
    <property type="entry name" value="BPD_transp_1_N"/>
</dbReference>
<dbReference type="InterPro" id="IPR000515">
    <property type="entry name" value="MetI-like"/>
</dbReference>
<dbReference type="InterPro" id="IPR035906">
    <property type="entry name" value="MetI-like_sf"/>
</dbReference>
<dbReference type="InterPro" id="IPR050045">
    <property type="entry name" value="Opp2B"/>
</dbReference>
<dbReference type="NCBIfam" id="NF045470">
    <property type="entry name" value="Opp2B"/>
    <property type="match status" value="1"/>
</dbReference>
<dbReference type="PANTHER" id="PTHR43163">
    <property type="entry name" value="DIPEPTIDE TRANSPORT SYSTEM PERMEASE PROTEIN DPPB-RELATED"/>
    <property type="match status" value="1"/>
</dbReference>
<dbReference type="PANTHER" id="PTHR43163:SF6">
    <property type="entry name" value="DIPEPTIDE TRANSPORT SYSTEM PERMEASE PROTEIN DPPB-RELATED"/>
    <property type="match status" value="1"/>
</dbReference>
<dbReference type="Pfam" id="PF00528">
    <property type="entry name" value="BPD_transp_1"/>
    <property type="match status" value="1"/>
</dbReference>
<dbReference type="Pfam" id="PF19300">
    <property type="entry name" value="BPD_transp_1_N"/>
    <property type="match status" value="1"/>
</dbReference>
<dbReference type="SUPFAM" id="SSF161098">
    <property type="entry name" value="MetI-like"/>
    <property type="match status" value="1"/>
</dbReference>
<dbReference type="PROSITE" id="PS50928">
    <property type="entry name" value="ABC_TM1"/>
    <property type="match status" value="1"/>
</dbReference>
<reference key="1">
    <citation type="journal article" date="2002" name="Lancet">
        <title>Genome and virulence determinants of high virulence community-acquired MRSA.</title>
        <authorList>
            <person name="Baba T."/>
            <person name="Takeuchi F."/>
            <person name="Kuroda M."/>
            <person name="Yuzawa H."/>
            <person name="Aoki K."/>
            <person name="Oguchi A."/>
            <person name="Nagai Y."/>
            <person name="Iwama N."/>
            <person name="Asano K."/>
            <person name="Naimi T."/>
            <person name="Kuroda H."/>
            <person name="Cui L."/>
            <person name="Yamamoto K."/>
            <person name="Hiramatsu K."/>
        </authorList>
    </citation>
    <scope>NUCLEOTIDE SEQUENCE [LARGE SCALE GENOMIC DNA]</scope>
    <source>
        <strain>MW2</strain>
    </source>
</reference>
<keyword id="KW-1003">Cell membrane</keyword>
<keyword id="KW-0406">Ion transport</keyword>
<keyword id="KW-0472">Membrane</keyword>
<keyword id="KW-0533">Nickel</keyword>
<keyword id="KW-0921">Nickel transport</keyword>
<keyword id="KW-0812">Transmembrane</keyword>
<keyword id="KW-1133">Transmembrane helix</keyword>
<keyword id="KW-0813">Transport</keyword>
<sequence length="328" mass="36784">MFIIKSMLYRLMQMIVVLFVISTLTFILMKLSPGNPVDKILHLDVAQVSTEQINATKDKLGLNDSLLVQWWHWMNHLLHFNLGKSFESKEPVTQILFNYAPITLLISFSTLVVSLCISIPLGIIAAKRFHKWTDKVIRVISTLSISLPAFFIGIILLFIVTNLMNIDSVILSQFILPVITLSLGMCAYIIRLVRSNLLMLLQSNIVQASRLRGMNERYILIHDLLKPTILPIIPLLGISLGSLIGGTVVIENLFDIPGIGYLLMDSIKSRDYPVIQGCVLFIGFFVVIINTIADLLTLLLDPKQRLQLGNPKIKTNTPLISVSSDRHA</sequence>
<proteinExistence type="inferred from homology"/>
<evidence type="ECO:0000250" key="1">
    <source>
        <dbReference type="UniProtKB" id="Q2FYQ5"/>
    </source>
</evidence>
<evidence type="ECO:0000255" key="2">
    <source>
        <dbReference type="PROSITE-ProRule" id="PRU00441"/>
    </source>
</evidence>
<evidence type="ECO:0000305" key="3"/>
<protein>
    <recommendedName>
        <fullName evidence="1">Nickel import system permease protein NikB</fullName>
    </recommendedName>
</protein>
<accession>Q8NWT4</accession>
<comment type="function">
    <text evidence="1">Part of the ABC transporter complex NikABCDE (Opp2) involved in nickel import. Probably responsible for the translocation of the substrate across the membrane.</text>
</comment>
<comment type="subunit">
    <text evidence="1">The complex is composed of two ATP-binding proteins (NikD and NikE), two transmembrane proteins (NikB and NikC) and a solute-binding protein (NikA).</text>
</comment>
<comment type="subcellular location">
    <subcellularLocation>
        <location evidence="3">Cell membrane</location>
        <topology evidence="2">Multi-pass membrane protein</topology>
    </subcellularLocation>
</comment>
<comment type="similarity">
    <text evidence="3">Belongs to the binding-protein-dependent transport system permease family. OppBC subfamily.</text>
</comment>
<gene>
    <name evidence="1" type="primary">nikB</name>
    <name type="synonym">oppB2</name>
    <name type="ordered locus">MW1270</name>
</gene>